<proteinExistence type="evidence at protein level"/>
<evidence type="ECO:0000250" key="1">
    <source>
        <dbReference type="UniProtKB" id="Q6AYA6"/>
    </source>
</evidence>
<evidence type="ECO:0000250" key="2">
    <source>
        <dbReference type="UniProtKB" id="Q9BQA9"/>
    </source>
</evidence>
<evidence type="ECO:0000255" key="3"/>
<evidence type="ECO:0000256" key="4">
    <source>
        <dbReference type="SAM" id="MobiDB-lite"/>
    </source>
</evidence>
<evidence type="ECO:0000269" key="5">
    <source>
    </source>
</evidence>
<evidence type="ECO:0000303" key="6">
    <source>
    </source>
</evidence>
<evidence type="ECO:0000305" key="7"/>
<evidence type="ECO:0000305" key="8">
    <source>
    </source>
</evidence>
<evidence type="ECO:0000312" key="9">
    <source>
        <dbReference type="MGI" id="MGI:2384959"/>
    </source>
</evidence>
<protein>
    <recommendedName>
        <fullName evidence="7">Cytochrome b-245 chaperone 1</fullName>
    </recommendedName>
    <alternativeName>
        <fullName evidence="6">Essential for reactive oxygen species protein</fullName>
        <shortName evidence="6">Eros</shortName>
    </alternativeName>
</protein>
<name>CYBC1_MOUSE</name>
<keyword id="KW-0143">Chaperone</keyword>
<keyword id="KW-0256">Endoplasmic reticulum</keyword>
<keyword id="KW-0391">Immunity</keyword>
<keyword id="KW-0399">Innate immunity</keyword>
<keyword id="KW-0472">Membrane</keyword>
<keyword id="KW-0597">Phosphoprotein</keyword>
<keyword id="KW-1185">Reference proteome</keyword>
<keyword id="KW-0812">Transmembrane</keyword>
<keyword id="KW-1133">Transmembrane helix</keyword>
<sequence length="187" mass="20921">MYMQVETRTSTRLHLKRAPGIRSWSLLVGILSTGLAAAYYSGDSLGWKLFYVTGCLFVAVQNLEDWEEAIFNKNTGKVILKTFSLYKKLLTLLRAGHDQVVVLLKDIQDVNVEEEKVRYFGKGYMVVLRFATGFSHPLTQSAVMGRRSDVEAIAKLITSFLELHRLESPSERSQSSDSEPDGPGGQS</sequence>
<organism>
    <name type="scientific">Mus musculus</name>
    <name type="common">Mouse</name>
    <dbReference type="NCBI Taxonomy" id="10090"/>
    <lineage>
        <taxon>Eukaryota</taxon>
        <taxon>Metazoa</taxon>
        <taxon>Chordata</taxon>
        <taxon>Craniata</taxon>
        <taxon>Vertebrata</taxon>
        <taxon>Euteleostomi</taxon>
        <taxon>Mammalia</taxon>
        <taxon>Eutheria</taxon>
        <taxon>Euarchontoglires</taxon>
        <taxon>Glires</taxon>
        <taxon>Rodentia</taxon>
        <taxon>Myomorpha</taxon>
        <taxon>Muroidea</taxon>
        <taxon>Muridae</taxon>
        <taxon>Murinae</taxon>
        <taxon>Mus</taxon>
        <taxon>Mus</taxon>
    </lineage>
</organism>
<reference key="1">
    <citation type="journal article" date="2005" name="Science">
        <title>The transcriptional landscape of the mammalian genome.</title>
        <authorList>
            <person name="Carninci P."/>
            <person name="Kasukawa T."/>
            <person name="Katayama S."/>
            <person name="Gough J."/>
            <person name="Frith M.C."/>
            <person name="Maeda N."/>
            <person name="Oyama R."/>
            <person name="Ravasi T."/>
            <person name="Lenhard B."/>
            <person name="Wells C."/>
            <person name="Kodzius R."/>
            <person name="Shimokawa K."/>
            <person name="Bajic V.B."/>
            <person name="Brenner S.E."/>
            <person name="Batalov S."/>
            <person name="Forrest A.R."/>
            <person name="Zavolan M."/>
            <person name="Davis M.J."/>
            <person name="Wilming L.G."/>
            <person name="Aidinis V."/>
            <person name="Allen J.E."/>
            <person name="Ambesi-Impiombato A."/>
            <person name="Apweiler R."/>
            <person name="Aturaliya R.N."/>
            <person name="Bailey T.L."/>
            <person name="Bansal M."/>
            <person name="Baxter L."/>
            <person name="Beisel K.W."/>
            <person name="Bersano T."/>
            <person name="Bono H."/>
            <person name="Chalk A.M."/>
            <person name="Chiu K.P."/>
            <person name="Choudhary V."/>
            <person name="Christoffels A."/>
            <person name="Clutterbuck D.R."/>
            <person name="Crowe M.L."/>
            <person name="Dalla E."/>
            <person name="Dalrymple B.P."/>
            <person name="de Bono B."/>
            <person name="Della Gatta G."/>
            <person name="di Bernardo D."/>
            <person name="Down T."/>
            <person name="Engstrom P."/>
            <person name="Fagiolini M."/>
            <person name="Faulkner G."/>
            <person name="Fletcher C.F."/>
            <person name="Fukushima T."/>
            <person name="Furuno M."/>
            <person name="Futaki S."/>
            <person name="Gariboldi M."/>
            <person name="Georgii-Hemming P."/>
            <person name="Gingeras T.R."/>
            <person name="Gojobori T."/>
            <person name="Green R.E."/>
            <person name="Gustincich S."/>
            <person name="Harbers M."/>
            <person name="Hayashi Y."/>
            <person name="Hensch T.K."/>
            <person name="Hirokawa N."/>
            <person name="Hill D."/>
            <person name="Huminiecki L."/>
            <person name="Iacono M."/>
            <person name="Ikeo K."/>
            <person name="Iwama A."/>
            <person name="Ishikawa T."/>
            <person name="Jakt M."/>
            <person name="Kanapin A."/>
            <person name="Katoh M."/>
            <person name="Kawasawa Y."/>
            <person name="Kelso J."/>
            <person name="Kitamura H."/>
            <person name="Kitano H."/>
            <person name="Kollias G."/>
            <person name="Krishnan S.P."/>
            <person name="Kruger A."/>
            <person name="Kummerfeld S.K."/>
            <person name="Kurochkin I.V."/>
            <person name="Lareau L.F."/>
            <person name="Lazarevic D."/>
            <person name="Lipovich L."/>
            <person name="Liu J."/>
            <person name="Liuni S."/>
            <person name="McWilliam S."/>
            <person name="Madan Babu M."/>
            <person name="Madera M."/>
            <person name="Marchionni L."/>
            <person name="Matsuda H."/>
            <person name="Matsuzawa S."/>
            <person name="Miki H."/>
            <person name="Mignone F."/>
            <person name="Miyake S."/>
            <person name="Morris K."/>
            <person name="Mottagui-Tabar S."/>
            <person name="Mulder N."/>
            <person name="Nakano N."/>
            <person name="Nakauchi H."/>
            <person name="Ng P."/>
            <person name="Nilsson R."/>
            <person name="Nishiguchi S."/>
            <person name="Nishikawa S."/>
            <person name="Nori F."/>
            <person name="Ohara O."/>
            <person name="Okazaki Y."/>
            <person name="Orlando V."/>
            <person name="Pang K.C."/>
            <person name="Pavan W.J."/>
            <person name="Pavesi G."/>
            <person name="Pesole G."/>
            <person name="Petrovsky N."/>
            <person name="Piazza S."/>
            <person name="Reed J."/>
            <person name="Reid J.F."/>
            <person name="Ring B.Z."/>
            <person name="Ringwald M."/>
            <person name="Rost B."/>
            <person name="Ruan Y."/>
            <person name="Salzberg S.L."/>
            <person name="Sandelin A."/>
            <person name="Schneider C."/>
            <person name="Schoenbach C."/>
            <person name="Sekiguchi K."/>
            <person name="Semple C.A."/>
            <person name="Seno S."/>
            <person name="Sessa L."/>
            <person name="Sheng Y."/>
            <person name="Shibata Y."/>
            <person name="Shimada H."/>
            <person name="Shimada K."/>
            <person name="Silva D."/>
            <person name="Sinclair B."/>
            <person name="Sperling S."/>
            <person name="Stupka E."/>
            <person name="Sugiura K."/>
            <person name="Sultana R."/>
            <person name="Takenaka Y."/>
            <person name="Taki K."/>
            <person name="Tammoja K."/>
            <person name="Tan S.L."/>
            <person name="Tang S."/>
            <person name="Taylor M.S."/>
            <person name="Tegner J."/>
            <person name="Teichmann S.A."/>
            <person name="Ueda H.R."/>
            <person name="van Nimwegen E."/>
            <person name="Verardo R."/>
            <person name="Wei C.L."/>
            <person name="Yagi K."/>
            <person name="Yamanishi H."/>
            <person name="Zabarovsky E."/>
            <person name="Zhu S."/>
            <person name="Zimmer A."/>
            <person name="Hide W."/>
            <person name="Bult C."/>
            <person name="Grimmond S.M."/>
            <person name="Teasdale R.D."/>
            <person name="Liu E.T."/>
            <person name="Brusic V."/>
            <person name="Quackenbush J."/>
            <person name="Wahlestedt C."/>
            <person name="Mattick J.S."/>
            <person name="Hume D.A."/>
            <person name="Kai C."/>
            <person name="Sasaki D."/>
            <person name="Tomaru Y."/>
            <person name="Fukuda S."/>
            <person name="Kanamori-Katayama M."/>
            <person name="Suzuki M."/>
            <person name="Aoki J."/>
            <person name="Arakawa T."/>
            <person name="Iida J."/>
            <person name="Imamura K."/>
            <person name="Itoh M."/>
            <person name="Kato T."/>
            <person name="Kawaji H."/>
            <person name="Kawagashira N."/>
            <person name="Kawashima T."/>
            <person name="Kojima M."/>
            <person name="Kondo S."/>
            <person name="Konno H."/>
            <person name="Nakano K."/>
            <person name="Ninomiya N."/>
            <person name="Nishio T."/>
            <person name="Okada M."/>
            <person name="Plessy C."/>
            <person name="Shibata K."/>
            <person name="Shiraki T."/>
            <person name="Suzuki S."/>
            <person name="Tagami M."/>
            <person name="Waki K."/>
            <person name="Watahiki A."/>
            <person name="Okamura-Oho Y."/>
            <person name="Suzuki H."/>
            <person name="Kawai J."/>
            <person name="Hayashizaki Y."/>
        </authorList>
    </citation>
    <scope>NUCLEOTIDE SEQUENCE [LARGE SCALE MRNA]</scope>
    <source>
        <strain>BALB/cJ</strain>
        <strain>C57BL/6J</strain>
        <strain>NOD</strain>
        <tissue>Inner ear</tissue>
        <tissue>Placenta</tissue>
    </source>
</reference>
<reference key="2">
    <citation type="journal article" date="2009" name="PLoS Biol.">
        <title>Lineage-specific biology revealed by a finished genome assembly of the mouse.</title>
        <authorList>
            <person name="Church D.M."/>
            <person name="Goodstadt L."/>
            <person name="Hillier L.W."/>
            <person name="Zody M.C."/>
            <person name="Goldstein S."/>
            <person name="She X."/>
            <person name="Bult C.J."/>
            <person name="Agarwala R."/>
            <person name="Cherry J.L."/>
            <person name="DiCuccio M."/>
            <person name="Hlavina W."/>
            <person name="Kapustin Y."/>
            <person name="Meric P."/>
            <person name="Maglott D."/>
            <person name="Birtle Z."/>
            <person name="Marques A.C."/>
            <person name="Graves T."/>
            <person name="Zhou S."/>
            <person name="Teague B."/>
            <person name="Potamousis K."/>
            <person name="Churas C."/>
            <person name="Place M."/>
            <person name="Herschleb J."/>
            <person name="Runnheim R."/>
            <person name="Forrest D."/>
            <person name="Amos-Landgraf J."/>
            <person name="Schwartz D.C."/>
            <person name="Cheng Z."/>
            <person name="Lindblad-Toh K."/>
            <person name="Eichler E.E."/>
            <person name="Ponting C.P."/>
        </authorList>
    </citation>
    <scope>NUCLEOTIDE SEQUENCE [LARGE SCALE GENOMIC DNA]</scope>
    <source>
        <strain>C57BL/6J</strain>
    </source>
</reference>
<reference key="3">
    <citation type="journal article" date="2004" name="Genome Res.">
        <title>The status, quality, and expansion of the NIH full-length cDNA project: the Mammalian Gene Collection (MGC).</title>
        <authorList>
            <consortium name="The MGC Project Team"/>
        </authorList>
    </citation>
    <scope>NUCLEOTIDE SEQUENCE [LARGE SCALE MRNA]</scope>
    <source>
        <strain>FVB/N</strain>
        <tissue>Eye</tissue>
        <tissue>Mammary tumor</tissue>
    </source>
</reference>
<reference key="4">
    <citation type="journal article" date="2010" name="Cell">
        <title>A tissue-specific atlas of mouse protein phosphorylation and expression.</title>
        <authorList>
            <person name="Huttlin E.L."/>
            <person name="Jedrychowski M.P."/>
            <person name="Elias J.E."/>
            <person name="Goswami T."/>
            <person name="Rad R."/>
            <person name="Beausoleil S.A."/>
            <person name="Villen J."/>
            <person name="Haas W."/>
            <person name="Sowa M.E."/>
            <person name="Gygi S.P."/>
        </authorList>
    </citation>
    <scope>IDENTIFICATION BY MASS SPECTROMETRY [LARGE SCALE ANALYSIS]</scope>
    <source>
        <tissue>Heart</tissue>
        <tissue>Kidney</tissue>
        <tissue>Liver</tissue>
        <tissue>Lung</tissue>
        <tissue>Pancreas</tissue>
        <tissue>Spleen</tissue>
        <tissue>Testis</tissue>
    </source>
</reference>
<reference key="5">
    <citation type="journal article" date="2017" name="J. Exp. Med.">
        <title>Eros is a novel transmembrane protein that controls the phagocyte respiratory burst and is essential for innate immunity.</title>
        <authorList>
            <person name="Thomas D.C."/>
            <person name="Clare S."/>
            <person name="Sowerby J.M."/>
            <person name="Pardo M."/>
            <person name="Juss J.K."/>
            <person name="Goulding D.A."/>
            <person name="van der Weyden L."/>
            <person name="Storisteanu D."/>
            <person name="Prakash A."/>
            <person name="Espeli M."/>
            <person name="Flint S."/>
            <person name="Lee J.C."/>
            <person name="Hoenderdos K."/>
            <person name="Kane L."/>
            <person name="Harcourt K."/>
            <person name="Mukhopadhyay S."/>
            <person name="Umrania Y."/>
            <person name="Antrobus R."/>
            <person name="Nathan J.A."/>
            <person name="Adams D.J."/>
            <person name="Bateman A."/>
            <person name="Choudhary J.S."/>
            <person name="Lyons P.A."/>
            <person name="Condliffe A.M."/>
            <person name="Chilvers E.R."/>
            <person name="Dougan G."/>
            <person name="Smith K.G."/>
        </authorList>
    </citation>
    <scope>FUNCTION</scope>
    <scope>DISRUPTION PHENOTYPE</scope>
    <scope>SUBCELLULAR LOCATION</scope>
</reference>
<dbReference type="EMBL" id="AK145884">
    <property type="protein sequence ID" value="BAE26724.1"/>
    <property type="molecule type" value="mRNA"/>
</dbReference>
<dbReference type="EMBL" id="AK158402">
    <property type="protein sequence ID" value="BAE34490.1"/>
    <property type="molecule type" value="mRNA"/>
</dbReference>
<dbReference type="EMBL" id="AK159453">
    <property type="protein sequence ID" value="BAE35096.1"/>
    <property type="molecule type" value="mRNA"/>
</dbReference>
<dbReference type="EMBL" id="AK168104">
    <property type="protein sequence ID" value="BAE40075.1"/>
    <property type="molecule type" value="mRNA"/>
</dbReference>
<dbReference type="EMBL" id="AK170767">
    <property type="protein sequence ID" value="BAE42017.1"/>
    <property type="molecule type" value="mRNA"/>
</dbReference>
<dbReference type="EMBL" id="AL808021">
    <property type="status" value="NOT_ANNOTATED_CDS"/>
    <property type="molecule type" value="Genomic_DNA"/>
</dbReference>
<dbReference type="EMBL" id="BC017643">
    <property type="protein sequence ID" value="AAH17643.1"/>
    <property type="molecule type" value="mRNA"/>
</dbReference>
<dbReference type="EMBL" id="BC026616">
    <property type="protein sequence ID" value="AAH26616.1"/>
    <property type="molecule type" value="mRNA"/>
</dbReference>
<dbReference type="EMBL" id="BC027406">
    <property type="protein sequence ID" value="AAH27406.1"/>
    <property type="molecule type" value="mRNA"/>
</dbReference>
<dbReference type="CCDS" id="CCDS25771.1"/>
<dbReference type="RefSeq" id="NP_001239477.1">
    <property type="nucleotide sequence ID" value="NM_001252548.1"/>
</dbReference>
<dbReference type="RefSeq" id="NP_001239478.1">
    <property type="nucleotide sequence ID" value="NM_001252549.1"/>
</dbReference>
<dbReference type="RefSeq" id="NP_001239479.1">
    <property type="nucleotide sequence ID" value="NM_001252550.1"/>
</dbReference>
<dbReference type="RefSeq" id="NP_001241664.1">
    <property type="nucleotide sequence ID" value="NM_001254735.1"/>
</dbReference>
<dbReference type="RefSeq" id="NP_659081.1">
    <property type="nucleotide sequence ID" value="NM_144832.2"/>
</dbReference>
<dbReference type="SMR" id="Q3TYS2"/>
<dbReference type="BioGRID" id="229904">
    <property type="interactions" value="2"/>
</dbReference>
<dbReference type="FunCoup" id="Q3TYS2">
    <property type="interactions" value="1517"/>
</dbReference>
<dbReference type="IntAct" id="Q3TYS2">
    <property type="interactions" value="1"/>
</dbReference>
<dbReference type="MINT" id="Q3TYS2"/>
<dbReference type="STRING" id="10090.ENSMUSP00000042277"/>
<dbReference type="iPTMnet" id="Q3TYS2"/>
<dbReference type="PhosphoSitePlus" id="Q3TYS2"/>
<dbReference type="jPOST" id="Q3TYS2"/>
<dbReference type="PaxDb" id="10090-ENSMUSP00000042277"/>
<dbReference type="PeptideAtlas" id="Q3TYS2"/>
<dbReference type="Pumba" id="Q3TYS2"/>
<dbReference type="Antibodypedia" id="53358">
    <property type="antibodies" value="136 antibodies from 12 providers"/>
</dbReference>
<dbReference type="DNASU" id="217370"/>
<dbReference type="Ensembl" id="ENSMUST00000038709.14">
    <property type="protein sequence ID" value="ENSMUSP00000042277.8"/>
    <property type="gene ID" value="ENSMUSG00000039294.15"/>
</dbReference>
<dbReference type="Ensembl" id="ENSMUST00000106115.8">
    <property type="protein sequence ID" value="ENSMUSP00000101721.2"/>
    <property type="gene ID" value="ENSMUSG00000039294.15"/>
</dbReference>
<dbReference type="GeneID" id="217370"/>
<dbReference type="KEGG" id="mmu:217370"/>
<dbReference type="UCSC" id="uc007mvn.2">
    <property type="organism name" value="mouse"/>
</dbReference>
<dbReference type="AGR" id="MGI:2384959"/>
<dbReference type="CTD" id="79415"/>
<dbReference type="MGI" id="MGI:2384959">
    <property type="gene designation" value="Cybc1"/>
</dbReference>
<dbReference type="VEuPathDB" id="HostDB:ENSMUSG00000039294"/>
<dbReference type="eggNOG" id="ENOG502S06T">
    <property type="taxonomic scope" value="Eukaryota"/>
</dbReference>
<dbReference type="GeneTree" id="ENSGT00390000004691"/>
<dbReference type="InParanoid" id="Q3TYS2"/>
<dbReference type="OMA" id="WKLFYIT"/>
<dbReference type="OrthoDB" id="10022724at2759"/>
<dbReference type="PhylomeDB" id="Q3TYS2"/>
<dbReference type="TreeFam" id="TF332389"/>
<dbReference type="BioGRID-ORCS" id="217370">
    <property type="hits" value="3 hits in 79 CRISPR screens"/>
</dbReference>
<dbReference type="ChiTaRS" id="Cybc1">
    <property type="organism name" value="mouse"/>
</dbReference>
<dbReference type="PRO" id="PR:Q3TYS2"/>
<dbReference type="Proteomes" id="UP000000589">
    <property type="component" value="Chromosome 11"/>
</dbReference>
<dbReference type="RNAct" id="Q3TYS2">
    <property type="molecule type" value="protein"/>
</dbReference>
<dbReference type="Bgee" id="ENSMUSG00000039294">
    <property type="expression patterns" value="Expressed in granulocyte and 235 other cell types or tissues"/>
</dbReference>
<dbReference type="ExpressionAtlas" id="Q3TYS2">
    <property type="expression patterns" value="baseline and differential"/>
</dbReference>
<dbReference type="GO" id="GO:0005783">
    <property type="term" value="C:endoplasmic reticulum"/>
    <property type="evidence" value="ECO:0000250"/>
    <property type="project" value="UniProtKB"/>
</dbReference>
<dbReference type="GO" id="GO:0005789">
    <property type="term" value="C:endoplasmic reticulum membrane"/>
    <property type="evidence" value="ECO:0007669"/>
    <property type="project" value="UniProtKB-SubCell"/>
</dbReference>
<dbReference type="GO" id="GO:0045087">
    <property type="term" value="P:innate immune response"/>
    <property type="evidence" value="ECO:0000315"/>
    <property type="project" value="UniProtKB"/>
</dbReference>
<dbReference type="GO" id="GO:0045728">
    <property type="term" value="P:respiratory burst after phagocytosis"/>
    <property type="evidence" value="ECO:0000315"/>
    <property type="project" value="UniProtKB"/>
</dbReference>
<dbReference type="InterPro" id="IPR027846">
    <property type="entry name" value="Cybc1"/>
</dbReference>
<dbReference type="PANTHER" id="PTHR31837">
    <property type="entry name" value="CYTOCHROME B-245 CHAPERONE 1"/>
    <property type="match status" value="1"/>
</dbReference>
<dbReference type="PANTHER" id="PTHR31837:SF3">
    <property type="entry name" value="CYTOCHROME B-245 CHAPERONE 1"/>
    <property type="match status" value="1"/>
</dbReference>
<dbReference type="Pfam" id="PF15169">
    <property type="entry name" value="Cybc1_Eros"/>
    <property type="match status" value="1"/>
</dbReference>
<gene>
    <name evidence="9" type="primary">Cybc1</name>
    <name evidence="6" type="synonym">Eros</name>
</gene>
<comment type="function">
    <text evidence="2 5">Functions as a chaperone necessary for a stable expression of the CYBA and CYBB subunits of the cytochrome b-245 heterodimer (By similarity). Controls the phagocyte respiratory burst and is essential for innate immunity (PubMed:28351984).</text>
</comment>
<comment type="subunit">
    <text evidence="2">Interacts with CYBB; CYBC1 may act as a chaperone stabilizing Cytochrome b-245 heterodimer.</text>
</comment>
<comment type="subcellular location">
    <subcellularLocation>
        <location evidence="8">Endoplasmic reticulum membrane</location>
        <topology evidence="7">Single-pass membrane protein</topology>
    </subcellularLocation>
</comment>
<comment type="disruption phenotype">
    <text evidence="5">Mutants are highly susceptible to Salmonella and Listeria infection and are impaired in their ability to control replication of either pathogen (PubMed:28351984). Mutant neutrophiles have a highly impaired superoxide burst (PubMed:28351984). Mice are very susceptible to Listeria monocytogenes and die within 5 days of infection, fail to form neutrophil extracellular traps but are resistant to melanoma metastasis (PubMed:28351984).</text>
</comment>
<comment type="similarity">
    <text>Belongs to the CYBC1 family.</text>
</comment>
<accession>Q3TYS2</accession>
<accession>A2AN24</accession>
<accession>A2AN25</accession>
<accession>Q8VD13</accession>
<feature type="chain" id="PRO_0000281419" description="Cytochrome b-245 chaperone 1">
    <location>
        <begin position="1"/>
        <end position="187"/>
    </location>
</feature>
<feature type="transmembrane region" description="Helical" evidence="3">
    <location>
        <begin position="20"/>
        <end position="42"/>
    </location>
</feature>
<feature type="region of interest" description="Disordered" evidence="4">
    <location>
        <begin position="167"/>
        <end position="187"/>
    </location>
</feature>
<feature type="modified residue" description="Phosphoserine" evidence="1">
    <location>
        <position position="168"/>
    </location>
</feature>
<feature type="modified residue" description="Phosphoserine" evidence="1">
    <location>
        <position position="170"/>
    </location>
</feature>
<feature type="sequence conflict" description="In Ref. 1; BAE34490." evidence="7" ref="1">
    <original>N</original>
    <variation>S</variation>
    <location>
        <position position="111"/>
    </location>
</feature>